<name>ASSY_PROM3</name>
<organism>
    <name type="scientific">Prochlorococcus marinus (strain MIT 9303)</name>
    <dbReference type="NCBI Taxonomy" id="59922"/>
    <lineage>
        <taxon>Bacteria</taxon>
        <taxon>Bacillati</taxon>
        <taxon>Cyanobacteriota</taxon>
        <taxon>Cyanophyceae</taxon>
        <taxon>Synechococcales</taxon>
        <taxon>Prochlorococcaceae</taxon>
        <taxon>Prochlorococcus</taxon>
    </lineage>
</organism>
<dbReference type="EC" id="6.3.4.5" evidence="1"/>
<dbReference type="EMBL" id="CP000554">
    <property type="protein sequence ID" value="ABM79739.1"/>
    <property type="molecule type" value="Genomic_DNA"/>
</dbReference>
<dbReference type="RefSeq" id="WP_011827577.1">
    <property type="nucleotide sequence ID" value="NC_008820.1"/>
</dbReference>
<dbReference type="SMR" id="A2CE29"/>
<dbReference type="STRING" id="59922.P9303_30091"/>
<dbReference type="KEGG" id="pmf:P9303_30091"/>
<dbReference type="HOGENOM" id="CLU_032784_4_2_3"/>
<dbReference type="BioCyc" id="PMAR59922:G1G80-2643-MONOMER"/>
<dbReference type="UniPathway" id="UPA00068">
    <property type="reaction ID" value="UER00113"/>
</dbReference>
<dbReference type="Proteomes" id="UP000002274">
    <property type="component" value="Chromosome"/>
</dbReference>
<dbReference type="GO" id="GO:0005737">
    <property type="term" value="C:cytoplasm"/>
    <property type="evidence" value="ECO:0007669"/>
    <property type="project" value="UniProtKB-SubCell"/>
</dbReference>
<dbReference type="GO" id="GO:0004055">
    <property type="term" value="F:argininosuccinate synthase activity"/>
    <property type="evidence" value="ECO:0007669"/>
    <property type="project" value="UniProtKB-UniRule"/>
</dbReference>
<dbReference type="GO" id="GO:0005524">
    <property type="term" value="F:ATP binding"/>
    <property type="evidence" value="ECO:0007669"/>
    <property type="project" value="UniProtKB-UniRule"/>
</dbReference>
<dbReference type="GO" id="GO:0000053">
    <property type="term" value="P:argininosuccinate metabolic process"/>
    <property type="evidence" value="ECO:0007669"/>
    <property type="project" value="TreeGrafter"/>
</dbReference>
<dbReference type="GO" id="GO:0006526">
    <property type="term" value="P:L-arginine biosynthetic process"/>
    <property type="evidence" value="ECO:0007669"/>
    <property type="project" value="UniProtKB-UniRule"/>
</dbReference>
<dbReference type="GO" id="GO:0000050">
    <property type="term" value="P:urea cycle"/>
    <property type="evidence" value="ECO:0007669"/>
    <property type="project" value="TreeGrafter"/>
</dbReference>
<dbReference type="CDD" id="cd01999">
    <property type="entry name" value="ASS"/>
    <property type="match status" value="1"/>
</dbReference>
<dbReference type="FunFam" id="3.40.50.620:FF:000019">
    <property type="entry name" value="Argininosuccinate synthase"/>
    <property type="match status" value="1"/>
</dbReference>
<dbReference type="FunFam" id="3.90.1260.10:FF:000007">
    <property type="entry name" value="Argininosuccinate synthase"/>
    <property type="match status" value="1"/>
</dbReference>
<dbReference type="Gene3D" id="3.90.1260.10">
    <property type="entry name" value="Argininosuccinate synthetase, chain A, domain 2"/>
    <property type="match status" value="1"/>
</dbReference>
<dbReference type="Gene3D" id="3.40.50.620">
    <property type="entry name" value="HUPs"/>
    <property type="match status" value="1"/>
</dbReference>
<dbReference type="Gene3D" id="1.20.5.470">
    <property type="entry name" value="Single helix bin"/>
    <property type="match status" value="1"/>
</dbReference>
<dbReference type="HAMAP" id="MF_00005">
    <property type="entry name" value="Arg_succ_synth_type1"/>
    <property type="match status" value="1"/>
</dbReference>
<dbReference type="InterPro" id="IPR048268">
    <property type="entry name" value="Arginosuc_syn_C"/>
</dbReference>
<dbReference type="InterPro" id="IPR048267">
    <property type="entry name" value="Arginosuc_syn_N"/>
</dbReference>
<dbReference type="InterPro" id="IPR001518">
    <property type="entry name" value="Arginosuc_synth"/>
</dbReference>
<dbReference type="InterPro" id="IPR018223">
    <property type="entry name" value="Arginosuc_synth_CS"/>
</dbReference>
<dbReference type="InterPro" id="IPR023434">
    <property type="entry name" value="Arginosuc_synth_type_1_subfam"/>
</dbReference>
<dbReference type="InterPro" id="IPR024074">
    <property type="entry name" value="AS_cat/multimer_dom_body"/>
</dbReference>
<dbReference type="InterPro" id="IPR014729">
    <property type="entry name" value="Rossmann-like_a/b/a_fold"/>
</dbReference>
<dbReference type="NCBIfam" id="TIGR00032">
    <property type="entry name" value="argG"/>
    <property type="match status" value="1"/>
</dbReference>
<dbReference type="NCBIfam" id="NF001770">
    <property type="entry name" value="PRK00509.1"/>
    <property type="match status" value="1"/>
</dbReference>
<dbReference type="PANTHER" id="PTHR11587">
    <property type="entry name" value="ARGININOSUCCINATE SYNTHASE"/>
    <property type="match status" value="1"/>
</dbReference>
<dbReference type="PANTHER" id="PTHR11587:SF2">
    <property type="entry name" value="ARGININOSUCCINATE SYNTHASE"/>
    <property type="match status" value="1"/>
</dbReference>
<dbReference type="Pfam" id="PF20979">
    <property type="entry name" value="Arginosuc_syn_C"/>
    <property type="match status" value="1"/>
</dbReference>
<dbReference type="Pfam" id="PF00764">
    <property type="entry name" value="Arginosuc_synth"/>
    <property type="match status" value="1"/>
</dbReference>
<dbReference type="SUPFAM" id="SSF52402">
    <property type="entry name" value="Adenine nucleotide alpha hydrolases-like"/>
    <property type="match status" value="1"/>
</dbReference>
<dbReference type="SUPFAM" id="SSF69864">
    <property type="entry name" value="Argininosuccinate synthetase, C-terminal domain"/>
    <property type="match status" value="1"/>
</dbReference>
<dbReference type="PROSITE" id="PS00564">
    <property type="entry name" value="ARGININOSUCCIN_SYN_1"/>
    <property type="match status" value="1"/>
</dbReference>
<dbReference type="PROSITE" id="PS00565">
    <property type="entry name" value="ARGININOSUCCIN_SYN_2"/>
    <property type="match status" value="1"/>
</dbReference>
<sequence length="401" mass="43913">MGRAKKVVLAYSGGVDTSVCIPYLKHEWGVDEVITFAADLGQGDELDPIRLKALDAGASQSLVGDLIEPFVEEFALPAIRANALYEGRYPLSTALARPLIARRLVEVAREVGADAVAHGCTGKGNDQVRFDLAIAALAPDLKVLTPAREWSMSREEAIAYGERCGIPAPVSKKSPYSIDLNLLGRSIEAGPLEDPMVAPPEEVFAMTSSIDAAPSQAQDIEIRFEAGNPVAIDGVRLDSVGLIKEANRLAGRHGFGRLDIIENRVVGIKSREIYETPGLLLLIRAHQELESLTLAADVLRMKRQLEMQWAELVYQGLWFSPLKDALDGFMDRTQIYVNGLVRIRLHKGNAMVIGRSSDTNSLYISEMATYGSEDNFDHRAAEGFIYIWGLPSRLWAAARRG</sequence>
<protein>
    <recommendedName>
        <fullName evidence="1">Argininosuccinate synthase</fullName>
        <ecNumber evidence="1">6.3.4.5</ecNumber>
    </recommendedName>
    <alternativeName>
        <fullName evidence="1">Citrulline--aspartate ligase</fullName>
    </alternativeName>
</protein>
<reference key="1">
    <citation type="journal article" date="2007" name="PLoS Genet.">
        <title>Patterns and implications of gene gain and loss in the evolution of Prochlorococcus.</title>
        <authorList>
            <person name="Kettler G.C."/>
            <person name="Martiny A.C."/>
            <person name="Huang K."/>
            <person name="Zucker J."/>
            <person name="Coleman M.L."/>
            <person name="Rodrigue S."/>
            <person name="Chen F."/>
            <person name="Lapidus A."/>
            <person name="Ferriera S."/>
            <person name="Johnson J."/>
            <person name="Steglich C."/>
            <person name="Church G.M."/>
            <person name="Richardson P."/>
            <person name="Chisholm S.W."/>
        </authorList>
    </citation>
    <scope>NUCLEOTIDE SEQUENCE [LARGE SCALE GENOMIC DNA]</scope>
    <source>
        <strain>MIT 9303</strain>
    </source>
</reference>
<gene>
    <name evidence="1" type="primary">argG</name>
    <name type="ordered locus">P9303_30091</name>
</gene>
<proteinExistence type="inferred from homology"/>
<keyword id="KW-0028">Amino-acid biosynthesis</keyword>
<keyword id="KW-0055">Arginine biosynthesis</keyword>
<keyword id="KW-0067">ATP-binding</keyword>
<keyword id="KW-0963">Cytoplasm</keyword>
<keyword id="KW-0436">Ligase</keyword>
<keyword id="KW-0547">Nucleotide-binding</keyword>
<comment type="catalytic activity">
    <reaction evidence="1">
        <text>L-citrulline + L-aspartate + ATP = 2-(N(omega)-L-arginino)succinate + AMP + diphosphate + H(+)</text>
        <dbReference type="Rhea" id="RHEA:10932"/>
        <dbReference type="ChEBI" id="CHEBI:15378"/>
        <dbReference type="ChEBI" id="CHEBI:29991"/>
        <dbReference type="ChEBI" id="CHEBI:30616"/>
        <dbReference type="ChEBI" id="CHEBI:33019"/>
        <dbReference type="ChEBI" id="CHEBI:57472"/>
        <dbReference type="ChEBI" id="CHEBI:57743"/>
        <dbReference type="ChEBI" id="CHEBI:456215"/>
        <dbReference type="EC" id="6.3.4.5"/>
    </reaction>
</comment>
<comment type="pathway">
    <text evidence="1">Amino-acid biosynthesis; L-arginine biosynthesis; L-arginine from L-ornithine and carbamoyl phosphate: step 2/3.</text>
</comment>
<comment type="subunit">
    <text evidence="1">Homotetramer.</text>
</comment>
<comment type="subcellular location">
    <subcellularLocation>
        <location evidence="1">Cytoplasm</location>
    </subcellularLocation>
</comment>
<comment type="similarity">
    <text evidence="1">Belongs to the argininosuccinate synthase family. Type 1 subfamily.</text>
</comment>
<evidence type="ECO:0000255" key="1">
    <source>
        <dbReference type="HAMAP-Rule" id="MF_00005"/>
    </source>
</evidence>
<feature type="chain" id="PRO_1000000419" description="Argininosuccinate synthase">
    <location>
        <begin position="1"/>
        <end position="401"/>
    </location>
</feature>
<feature type="binding site" evidence="1">
    <location>
        <begin position="10"/>
        <end position="18"/>
    </location>
    <ligand>
        <name>ATP</name>
        <dbReference type="ChEBI" id="CHEBI:30616"/>
    </ligand>
</feature>
<feature type="binding site" evidence="1">
    <location>
        <position position="38"/>
    </location>
    <ligand>
        <name>ATP</name>
        <dbReference type="ChEBI" id="CHEBI:30616"/>
    </ligand>
</feature>
<feature type="binding site" evidence="1">
    <location>
        <position position="89"/>
    </location>
    <ligand>
        <name>L-citrulline</name>
        <dbReference type="ChEBI" id="CHEBI:57743"/>
    </ligand>
</feature>
<feature type="binding site" evidence="1">
    <location>
        <position position="119"/>
    </location>
    <ligand>
        <name>ATP</name>
        <dbReference type="ChEBI" id="CHEBI:30616"/>
    </ligand>
</feature>
<feature type="binding site" evidence="1">
    <location>
        <position position="121"/>
    </location>
    <ligand>
        <name>L-aspartate</name>
        <dbReference type="ChEBI" id="CHEBI:29991"/>
    </ligand>
</feature>
<feature type="binding site" evidence="1">
    <location>
        <position position="125"/>
    </location>
    <ligand>
        <name>L-aspartate</name>
        <dbReference type="ChEBI" id="CHEBI:29991"/>
    </ligand>
</feature>
<feature type="binding site" evidence="1">
    <location>
        <position position="125"/>
    </location>
    <ligand>
        <name>L-citrulline</name>
        <dbReference type="ChEBI" id="CHEBI:57743"/>
    </ligand>
</feature>
<feature type="binding site" evidence="1">
    <location>
        <position position="126"/>
    </location>
    <ligand>
        <name>L-aspartate</name>
        <dbReference type="ChEBI" id="CHEBI:29991"/>
    </ligand>
</feature>
<feature type="binding site" evidence="1">
    <location>
        <position position="129"/>
    </location>
    <ligand>
        <name>L-citrulline</name>
        <dbReference type="ChEBI" id="CHEBI:57743"/>
    </ligand>
</feature>
<feature type="binding site" evidence="1">
    <location>
        <position position="177"/>
    </location>
    <ligand>
        <name>L-citrulline</name>
        <dbReference type="ChEBI" id="CHEBI:57743"/>
    </ligand>
</feature>
<feature type="binding site" evidence="1">
    <location>
        <position position="186"/>
    </location>
    <ligand>
        <name>L-citrulline</name>
        <dbReference type="ChEBI" id="CHEBI:57743"/>
    </ligand>
</feature>
<feature type="binding site" evidence="1">
    <location>
        <position position="262"/>
    </location>
    <ligand>
        <name>L-citrulline</name>
        <dbReference type="ChEBI" id="CHEBI:57743"/>
    </ligand>
</feature>
<feature type="binding site" evidence="1">
    <location>
        <position position="274"/>
    </location>
    <ligand>
        <name>L-citrulline</name>
        <dbReference type="ChEBI" id="CHEBI:57743"/>
    </ligand>
</feature>
<accession>A2CE29</accession>